<keyword id="KW-0028">Amino-acid biosynthesis</keyword>
<keyword id="KW-0057">Aromatic amino acid biosynthesis</keyword>
<keyword id="KW-0963">Cytoplasm</keyword>
<keyword id="KW-1185">Reference proteome</keyword>
<keyword id="KW-0808">Transferase</keyword>
<accession>Q492S6</accession>
<reference key="1">
    <citation type="journal article" date="2005" name="Genome Res.">
        <title>Genome sequence of Blochmannia pennsylvanicus indicates parallel evolutionary trends among bacterial mutualists of insects.</title>
        <authorList>
            <person name="Degnan P.H."/>
            <person name="Lazarus A.B."/>
            <person name="Wernegreen J.J."/>
        </authorList>
    </citation>
    <scope>NUCLEOTIDE SEQUENCE [LARGE SCALE GENOMIC DNA]</scope>
    <source>
        <strain>BPEN</strain>
    </source>
</reference>
<sequence>MNDFIKLAPIKKIQGTIHLPGSKSISNRALLLAAQATGTTQLTNLLDSDDVRCMLDALRNLGVSYCLSNNRKTCEINGIGGPIQSKNNNQLILSLGNAGTVMRPLIAALSVQTQNIVLTGHPRMKDRPIAHLVDALRQGGARIEYMERNGYPPIRLYGGYYGGEIFIKGSISSQFLSSVLMMTPLAYRDTLIKVDGALVSRPYIDITLSLMKIFGINIQHDNYRVFYCKGNMAYQSPGDYLVEGDASSASYFLAASAIRGGTVRVIGVGRNSKQGDIYFANILESMGAKIAWGDNYIECTRGADLNAVDLDVNNIPDAAMTLAITALFSINGPTILRNIYNWRVKESDRLAAMATELRKIGAEIVEGYDYLQITPPFKIESAYINTYDDHRIAMCFSLVALSDVSIIINNPKCTDKTFPDFFTQLSSISVLQ</sequence>
<organism>
    <name type="scientific">Blochmanniella pennsylvanica (strain BPEN)</name>
    <dbReference type="NCBI Taxonomy" id="291272"/>
    <lineage>
        <taxon>Bacteria</taxon>
        <taxon>Pseudomonadati</taxon>
        <taxon>Pseudomonadota</taxon>
        <taxon>Gammaproteobacteria</taxon>
        <taxon>Enterobacterales</taxon>
        <taxon>Enterobacteriaceae</taxon>
        <taxon>ant endosymbionts</taxon>
        <taxon>Candidatus Blochmanniella</taxon>
    </lineage>
</organism>
<name>AROA_BLOPB</name>
<feature type="chain" id="PRO_1000012411" description="3-phosphoshikimate 1-carboxyvinyltransferase">
    <location>
        <begin position="1"/>
        <end position="432"/>
    </location>
</feature>
<feature type="active site" description="Proton acceptor" evidence="1">
    <location>
        <position position="317"/>
    </location>
</feature>
<feature type="binding site" evidence="1">
    <location>
        <position position="23"/>
    </location>
    <ligand>
        <name>3-phosphoshikimate</name>
        <dbReference type="ChEBI" id="CHEBI:145989"/>
    </ligand>
</feature>
<feature type="binding site" evidence="1">
    <location>
        <position position="23"/>
    </location>
    <ligand>
        <name>phosphoenolpyruvate</name>
        <dbReference type="ChEBI" id="CHEBI:58702"/>
    </ligand>
</feature>
<feature type="binding site" evidence="1">
    <location>
        <position position="24"/>
    </location>
    <ligand>
        <name>3-phosphoshikimate</name>
        <dbReference type="ChEBI" id="CHEBI:145989"/>
    </ligand>
</feature>
<feature type="binding site" evidence="1">
    <location>
        <position position="28"/>
    </location>
    <ligand>
        <name>3-phosphoshikimate</name>
        <dbReference type="ChEBI" id="CHEBI:145989"/>
    </ligand>
</feature>
<feature type="binding site" evidence="1">
    <location>
        <position position="99"/>
    </location>
    <ligand>
        <name>phosphoenolpyruvate</name>
        <dbReference type="ChEBI" id="CHEBI:58702"/>
    </ligand>
</feature>
<feature type="binding site" evidence="1">
    <location>
        <position position="127"/>
    </location>
    <ligand>
        <name>phosphoenolpyruvate</name>
        <dbReference type="ChEBI" id="CHEBI:58702"/>
    </ligand>
</feature>
<feature type="binding site" evidence="1">
    <location>
        <position position="172"/>
    </location>
    <ligand>
        <name>3-phosphoshikimate</name>
        <dbReference type="ChEBI" id="CHEBI:145989"/>
    </ligand>
</feature>
<feature type="binding site" evidence="1">
    <location>
        <position position="173"/>
    </location>
    <ligand>
        <name>3-phosphoshikimate</name>
        <dbReference type="ChEBI" id="CHEBI:145989"/>
    </ligand>
</feature>
<feature type="binding site" evidence="1">
    <location>
        <position position="174"/>
    </location>
    <ligand>
        <name>3-phosphoshikimate</name>
        <dbReference type="ChEBI" id="CHEBI:145989"/>
    </ligand>
</feature>
<feature type="binding site" evidence="1">
    <location>
        <position position="174"/>
    </location>
    <ligand>
        <name>phosphoenolpyruvate</name>
        <dbReference type="ChEBI" id="CHEBI:58702"/>
    </ligand>
</feature>
<feature type="binding site" evidence="1">
    <location>
        <position position="200"/>
    </location>
    <ligand>
        <name>3-phosphoshikimate</name>
        <dbReference type="ChEBI" id="CHEBI:145989"/>
    </ligand>
</feature>
<feature type="binding site" evidence="1">
    <location>
        <position position="317"/>
    </location>
    <ligand>
        <name>3-phosphoshikimate</name>
        <dbReference type="ChEBI" id="CHEBI:145989"/>
    </ligand>
</feature>
<feature type="binding site" evidence="1">
    <location>
        <position position="341"/>
    </location>
    <ligand>
        <name>3-phosphoshikimate</name>
        <dbReference type="ChEBI" id="CHEBI:145989"/>
    </ligand>
</feature>
<feature type="binding site" evidence="1">
    <location>
        <position position="345"/>
    </location>
    <ligand>
        <name>3-phosphoshikimate</name>
        <dbReference type="ChEBI" id="CHEBI:145989"/>
    </ligand>
</feature>
<feature type="binding site" evidence="1">
    <location>
        <position position="349"/>
    </location>
    <ligand>
        <name>phosphoenolpyruvate</name>
        <dbReference type="ChEBI" id="CHEBI:58702"/>
    </ligand>
</feature>
<feature type="binding site" evidence="1">
    <location>
        <position position="391"/>
    </location>
    <ligand>
        <name>phosphoenolpyruvate</name>
        <dbReference type="ChEBI" id="CHEBI:58702"/>
    </ligand>
</feature>
<feature type="binding site" evidence="1">
    <location>
        <position position="416"/>
    </location>
    <ligand>
        <name>phosphoenolpyruvate</name>
        <dbReference type="ChEBI" id="CHEBI:58702"/>
    </ligand>
</feature>
<protein>
    <recommendedName>
        <fullName evidence="1">3-phosphoshikimate 1-carboxyvinyltransferase</fullName>
        <ecNumber evidence="1">2.5.1.19</ecNumber>
    </recommendedName>
    <alternativeName>
        <fullName evidence="1">5-enolpyruvylshikimate-3-phosphate synthase</fullName>
        <shortName evidence="1">EPSP synthase</shortName>
        <shortName evidence="1">EPSPS</shortName>
    </alternativeName>
</protein>
<evidence type="ECO:0000255" key="1">
    <source>
        <dbReference type="HAMAP-Rule" id="MF_00210"/>
    </source>
</evidence>
<gene>
    <name evidence="1" type="primary">aroA</name>
    <name type="ordered locus">BPEN_393</name>
</gene>
<dbReference type="EC" id="2.5.1.19" evidence="1"/>
<dbReference type="EMBL" id="CP000016">
    <property type="protein sequence ID" value="AAZ41017.1"/>
    <property type="molecule type" value="Genomic_DNA"/>
</dbReference>
<dbReference type="RefSeq" id="WP_011282926.1">
    <property type="nucleotide sequence ID" value="NC_007292.1"/>
</dbReference>
<dbReference type="SMR" id="Q492S6"/>
<dbReference type="STRING" id="291272.BPEN_393"/>
<dbReference type="KEGG" id="bpn:BPEN_393"/>
<dbReference type="eggNOG" id="COG0128">
    <property type="taxonomic scope" value="Bacteria"/>
</dbReference>
<dbReference type="HOGENOM" id="CLU_024321_0_0_6"/>
<dbReference type="OrthoDB" id="9809920at2"/>
<dbReference type="UniPathway" id="UPA00053">
    <property type="reaction ID" value="UER00089"/>
</dbReference>
<dbReference type="Proteomes" id="UP000007794">
    <property type="component" value="Chromosome"/>
</dbReference>
<dbReference type="GO" id="GO:0005737">
    <property type="term" value="C:cytoplasm"/>
    <property type="evidence" value="ECO:0007669"/>
    <property type="project" value="UniProtKB-SubCell"/>
</dbReference>
<dbReference type="GO" id="GO:0003866">
    <property type="term" value="F:3-phosphoshikimate 1-carboxyvinyltransferase activity"/>
    <property type="evidence" value="ECO:0007669"/>
    <property type="project" value="UniProtKB-UniRule"/>
</dbReference>
<dbReference type="GO" id="GO:0008652">
    <property type="term" value="P:amino acid biosynthetic process"/>
    <property type="evidence" value="ECO:0007669"/>
    <property type="project" value="UniProtKB-KW"/>
</dbReference>
<dbReference type="GO" id="GO:0009073">
    <property type="term" value="P:aromatic amino acid family biosynthetic process"/>
    <property type="evidence" value="ECO:0007669"/>
    <property type="project" value="UniProtKB-KW"/>
</dbReference>
<dbReference type="GO" id="GO:0009423">
    <property type="term" value="P:chorismate biosynthetic process"/>
    <property type="evidence" value="ECO:0007669"/>
    <property type="project" value="UniProtKB-UniRule"/>
</dbReference>
<dbReference type="CDD" id="cd01556">
    <property type="entry name" value="EPSP_synthase"/>
    <property type="match status" value="1"/>
</dbReference>
<dbReference type="FunFam" id="3.65.10.10:FF:000003">
    <property type="entry name" value="3-phosphoshikimate 1-carboxyvinyltransferase"/>
    <property type="match status" value="1"/>
</dbReference>
<dbReference type="FunFam" id="3.65.10.10:FF:000004">
    <property type="entry name" value="3-phosphoshikimate 1-carboxyvinyltransferase"/>
    <property type="match status" value="1"/>
</dbReference>
<dbReference type="Gene3D" id="3.65.10.10">
    <property type="entry name" value="Enolpyruvate transferase domain"/>
    <property type="match status" value="2"/>
</dbReference>
<dbReference type="HAMAP" id="MF_00210">
    <property type="entry name" value="EPSP_synth"/>
    <property type="match status" value="1"/>
</dbReference>
<dbReference type="InterPro" id="IPR001986">
    <property type="entry name" value="Enolpyruvate_Tfrase_dom"/>
</dbReference>
<dbReference type="InterPro" id="IPR036968">
    <property type="entry name" value="Enolpyruvate_Tfrase_sf"/>
</dbReference>
<dbReference type="InterPro" id="IPR006264">
    <property type="entry name" value="EPSP_synthase"/>
</dbReference>
<dbReference type="InterPro" id="IPR023193">
    <property type="entry name" value="EPSP_synthase_CS"/>
</dbReference>
<dbReference type="InterPro" id="IPR013792">
    <property type="entry name" value="RNA3'P_cycl/enolpyr_Trfase_a/b"/>
</dbReference>
<dbReference type="NCBIfam" id="TIGR01356">
    <property type="entry name" value="aroA"/>
    <property type="match status" value="1"/>
</dbReference>
<dbReference type="PANTHER" id="PTHR21090">
    <property type="entry name" value="AROM/DEHYDROQUINATE SYNTHASE"/>
    <property type="match status" value="1"/>
</dbReference>
<dbReference type="PANTHER" id="PTHR21090:SF5">
    <property type="entry name" value="PENTAFUNCTIONAL AROM POLYPEPTIDE"/>
    <property type="match status" value="1"/>
</dbReference>
<dbReference type="Pfam" id="PF00275">
    <property type="entry name" value="EPSP_synthase"/>
    <property type="match status" value="1"/>
</dbReference>
<dbReference type="PIRSF" id="PIRSF000505">
    <property type="entry name" value="EPSPS"/>
    <property type="match status" value="1"/>
</dbReference>
<dbReference type="SUPFAM" id="SSF55205">
    <property type="entry name" value="EPT/RTPC-like"/>
    <property type="match status" value="1"/>
</dbReference>
<dbReference type="PROSITE" id="PS00104">
    <property type="entry name" value="EPSP_SYNTHASE_1"/>
    <property type="match status" value="1"/>
</dbReference>
<dbReference type="PROSITE" id="PS00885">
    <property type="entry name" value="EPSP_SYNTHASE_2"/>
    <property type="match status" value="1"/>
</dbReference>
<comment type="function">
    <text evidence="1">Catalyzes the transfer of the enolpyruvyl moiety of phosphoenolpyruvate (PEP) to the 5-hydroxyl of shikimate-3-phosphate (S3P) to produce enolpyruvyl shikimate-3-phosphate and inorganic phosphate.</text>
</comment>
<comment type="catalytic activity">
    <reaction evidence="1">
        <text>3-phosphoshikimate + phosphoenolpyruvate = 5-O-(1-carboxyvinyl)-3-phosphoshikimate + phosphate</text>
        <dbReference type="Rhea" id="RHEA:21256"/>
        <dbReference type="ChEBI" id="CHEBI:43474"/>
        <dbReference type="ChEBI" id="CHEBI:57701"/>
        <dbReference type="ChEBI" id="CHEBI:58702"/>
        <dbReference type="ChEBI" id="CHEBI:145989"/>
        <dbReference type="EC" id="2.5.1.19"/>
    </reaction>
    <physiologicalReaction direction="left-to-right" evidence="1">
        <dbReference type="Rhea" id="RHEA:21257"/>
    </physiologicalReaction>
</comment>
<comment type="pathway">
    <text evidence="1">Metabolic intermediate biosynthesis; chorismate biosynthesis; chorismate from D-erythrose 4-phosphate and phosphoenolpyruvate: step 6/7.</text>
</comment>
<comment type="subunit">
    <text evidence="1">Monomer.</text>
</comment>
<comment type="subcellular location">
    <subcellularLocation>
        <location evidence="1">Cytoplasm</location>
    </subcellularLocation>
</comment>
<comment type="similarity">
    <text evidence="1">Belongs to the EPSP synthase family.</text>
</comment>
<proteinExistence type="inferred from homology"/>